<gene>
    <name evidence="1" type="primary">ppnP</name>
    <name type="ordered locus">H16_A3062</name>
</gene>
<sequence>MEVSQFDNVSVVKKANLYFDGKCVSHTVLFPDGTRKTLGVIFPAALTFNTGAPEIMEINAGTCRVRLAGSEDWQTYGAGQQFSVPGNSSFDIEVQETLDYVCHFA</sequence>
<dbReference type="EC" id="2.4.2.1" evidence="1"/>
<dbReference type="EC" id="2.4.2.2" evidence="1"/>
<dbReference type="EMBL" id="AM260479">
    <property type="protein sequence ID" value="CAJ94137.1"/>
    <property type="status" value="ALT_INIT"/>
    <property type="molecule type" value="Genomic_DNA"/>
</dbReference>
<dbReference type="SMR" id="Q0K784"/>
<dbReference type="STRING" id="381666.H16_A3062"/>
<dbReference type="KEGG" id="reh:H16_A3062"/>
<dbReference type="eggNOG" id="COG3123">
    <property type="taxonomic scope" value="Bacteria"/>
</dbReference>
<dbReference type="HOGENOM" id="CLU_157874_1_0_4"/>
<dbReference type="Proteomes" id="UP000008210">
    <property type="component" value="Chromosome 1"/>
</dbReference>
<dbReference type="GO" id="GO:0005829">
    <property type="term" value="C:cytosol"/>
    <property type="evidence" value="ECO:0007669"/>
    <property type="project" value="TreeGrafter"/>
</dbReference>
<dbReference type="GO" id="GO:0047975">
    <property type="term" value="F:guanosine phosphorylase activity"/>
    <property type="evidence" value="ECO:0007669"/>
    <property type="project" value="UniProtKB-EC"/>
</dbReference>
<dbReference type="GO" id="GO:0004731">
    <property type="term" value="F:purine-nucleoside phosphorylase activity"/>
    <property type="evidence" value="ECO:0007669"/>
    <property type="project" value="UniProtKB-UniRule"/>
</dbReference>
<dbReference type="GO" id="GO:0009032">
    <property type="term" value="F:thymidine phosphorylase activity"/>
    <property type="evidence" value="ECO:0007669"/>
    <property type="project" value="UniProtKB-EC"/>
</dbReference>
<dbReference type="GO" id="GO:0004850">
    <property type="term" value="F:uridine phosphorylase activity"/>
    <property type="evidence" value="ECO:0007669"/>
    <property type="project" value="UniProtKB-EC"/>
</dbReference>
<dbReference type="CDD" id="cd20296">
    <property type="entry name" value="cupin_PpnP-like"/>
    <property type="match status" value="1"/>
</dbReference>
<dbReference type="Gene3D" id="2.60.120.10">
    <property type="entry name" value="Jelly Rolls"/>
    <property type="match status" value="1"/>
</dbReference>
<dbReference type="HAMAP" id="MF_01537">
    <property type="entry name" value="Nucleos_phosphorylase_PpnP"/>
    <property type="match status" value="1"/>
</dbReference>
<dbReference type="InterPro" id="IPR009664">
    <property type="entry name" value="Ppnp"/>
</dbReference>
<dbReference type="InterPro" id="IPR014710">
    <property type="entry name" value="RmlC-like_jellyroll"/>
</dbReference>
<dbReference type="InterPro" id="IPR011051">
    <property type="entry name" value="RmlC_Cupin_sf"/>
</dbReference>
<dbReference type="PANTHER" id="PTHR36540">
    <property type="entry name" value="PYRIMIDINE/PURINE NUCLEOSIDE PHOSPHORYLASE"/>
    <property type="match status" value="1"/>
</dbReference>
<dbReference type="PANTHER" id="PTHR36540:SF1">
    <property type="entry name" value="PYRIMIDINE_PURINE NUCLEOSIDE PHOSPHORYLASE"/>
    <property type="match status" value="1"/>
</dbReference>
<dbReference type="Pfam" id="PF06865">
    <property type="entry name" value="Ppnp"/>
    <property type="match status" value="1"/>
</dbReference>
<dbReference type="SUPFAM" id="SSF51182">
    <property type="entry name" value="RmlC-like cupins"/>
    <property type="match status" value="1"/>
</dbReference>
<feature type="chain" id="PRO_0000292790" description="Pyrimidine/purine nucleoside phosphorylase">
    <location>
        <begin position="1"/>
        <end position="105"/>
    </location>
</feature>
<protein>
    <recommendedName>
        <fullName evidence="1">Pyrimidine/purine nucleoside phosphorylase</fullName>
        <ecNumber evidence="1">2.4.2.1</ecNumber>
        <ecNumber evidence="1">2.4.2.2</ecNumber>
    </recommendedName>
    <alternativeName>
        <fullName evidence="1">Adenosine phosphorylase</fullName>
    </alternativeName>
    <alternativeName>
        <fullName evidence="1">Cytidine phosphorylase</fullName>
    </alternativeName>
    <alternativeName>
        <fullName evidence="1">Guanosine phosphorylase</fullName>
    </alternativeName>
    <alternativeName>
        <fullName evidence="1">Inosine phosphorylase</fullName>
    </alternativeName>
    <alternativeName>
        <fullName evidence="1">Thymidine phosphorylase</fullName>
    </alternativeName>
    <alternativeName>
        <fullName evidence="1">Uridine phosphorylase</fullName>
    </alternativeName>
    <alternativeName>
        <fullName evidence="1">Xanthosine phosphorylase</fullName>
    </alternativeName>
</protein>
<comment type="function">
    <text evidence="1">Catalyzes the phosphorolysis of diverse nucleosides, yielding D-ribose 1-phosphate and the respective free bases. Can use uridine, adenosine, guanosine, cytidine, thymidine, inosine and xanthosine as substrates. Also catalyzes the reverse reactions.</text>
</comment>
<comment type="catalytic activity">
    <reaction evidence="1">
        <text>a purine D-ribonucleoside + phosphate = a purine nucleobase + alpha-D-ribose 1-phosphate</text>
        <dbReference type="Rhea" id="RHEA:19805"/>
        <dbReference type="ChEBI" id="CHEBI:26386"/>
        <dbReference type="ChEBI" id="CHEBI:43474"/>
        <dbReference type="ChEBI" id="CHEBI:57720"/>
        <dbReference type="ChEBI" id="CHEBI:142355"/>
        <dbReference type="EC" id="2.4.2.1"/>
    </reaction>
</comment>
<comment type="catalytic activity">
    <reaction evidence="1">
        <text>adenosine + phosphate = alpha-D-ribose 1-phosphate + adenine</text>
        <dbReference type="Rhea" id="RHEA:27642"/>
        <dbReference type="ChEBI" id="CHEBI:16335"/>
        <dbReference type="ChEBI" id="CHEBI:16708"/>
        <dbReference type="ChEBI" id="CHEBI:43474"/>
        <dbReference type="ChEBI" id="CHEBI:57720"/>
        <dbReference type="EC" id="2.4.2.1"/>
    </reaction>
</comment>
<comment type="catalytic activity">
    <reaction evidence="1">
        <text>cytidine + phosphate = cytosine + alpha-D-ribose 1-phosphate</text>
        <dbReference type="Rhea" id="RHEA:52540"/>
        <dbReference type="ChEBI" id="CHEBI:16040"/>
        <dbReference type="ChEBI" id="CHEBI:17562"/>
        <dbReference type="ChEBI" id="CHEBI:43474"/>
        <dbReference type="ChEBI" id="CHEBI:57720"/>
        <dbReference type="EC" id="2.4.2.2"/>
    </reaction>
</comment>
<comment type="catalytic activity">
    <reaction evidence="1">
        <text>guanosine + phosphate = alpha-D-ribose 1-phosphate + guanine</text>
        <dbReference type="Rhea" id="RHEA:13233"/>
        <dbReference type="ChEBI" id="CHEBI:16235"/>
        <dbReference type="ChEBI" id="CHEBI:16750"/>
        <dbReference type="ChEBI" id="CHEBI:43474"/>
        <dbReference type="ChEBI" id="CHEBI:57720"/>
        <dbReference type="EC" id="2.4.2.1"/>
    </reaction>
</comment>
<comment type="catalytic activity">
    <reaction evidence="1">
        <text>inosine + phosphate = alpha-D-ribose 1-phosphate + hypoxanthine</text>
        <dbReference type="Rhea" id="RHEA:27646"/>
        <dbReference type="ChEBI" id="CHEBI:17368"/>
        <dbReference type="ChEBI" id="CHEBI:17596"/>
        <dbReference type="ChEBI" id="CHEBI:43474"/>
        <dbReference type="ChEBI" id="CHEBI:57720"/>
        <dbReference type="EC" id="2.4.2.1"/>
    </reaction>
</comment>
<comment type="catalytic activity">
    <reaction evidence="1">
        <text>thymidine + phosphate = 2-deoxy-alpha-D-ribose 1-phosphate + thymine</text>
        <dbReference type="Rhea" id="RHEA:16037"/>
        <dbReference type="ChEBI" id="CHEBI:17748"/>
        <dbReference type="ChEBI" id="CHEBI:17821"/>
        <dbReference type="ChEBI" id="CHEBI:43474"/>
        <dbReference type="ChEBI" id="CHEBI:57259"/>
        <dbReference type="EC" id="2.4.2.2"/>
    </reaction>
</comment>
<comment type="catalytic activity">
    <reaction evidence="1">
        <text>uridine + phosphate = alpha-D-ribose 1-phosphate + uracil</text>
        <dbReference type="Rhea" id="RHEA:24388"/>
        <dbReference type="ChEBI" id="CHEBI:16704"/>
        <dbReference type="ChEBI" id="CHEBI:17568"/>
        <dbReference type="ChEBI" id="CHEBI:43474"/>
        <dbReference type="ChEBI" id="CHEBI:57720"/>
        <dbReference type="EC" id="2.4.2.2"/>
    </reaction>
</comment>
<comment type="catalytic activity">
    <reaction evidence="1">
        <text>xanthosine + phosphate = alpha-D-ribose 1-phosphate + xanthine</text>
        <dbReference type="Rhea" id="RHEA:27638"/>
        <dbReference type="ChEBI" id="CHEBI:17712"/>
        <dbReference type="ChEBI" id="CHEBI:18107"/>
        <dbReference type="ChEBI" id="CHEBI:43474"/>
        <dbReference type="ChEBI" id="CHEBI:57720"/>
        <dbReference type="EC" id="2.4.2.1"/>
    </reaction>
</comment>
<comment type="similarity">
    <text evidence="1">Belongs to the nucleoside phosphorylase PpnP family.</text>
</comment>
<comment type="sequence caution" evidence="2">
    <conflict type="erroneous initiation">
        <sequence resource="EMBL-CDS" id="CAJ94137"/>
    </conflict>
</comment>
<evidence type="ECO:0000255" key="1">
    <source>
        <dbReference type="HAMAP-Rule" id="MF_01537"/>
    </source>
</evidence>
<evidence type="ECO:0000305" key="2"/>
<organism>
    <name type="scientific">Cupriavidus necator (strain ATCC 17699 / DSM 428 / KCTC 22496 / NCIMB 10442 / H16 / Stanier 337)</name>
    <name type="common">Ralstonia eutropha</name>
    <dbReference type="NCBI Taxonomy" id="381666"/>
    <lineage>
        <taxon>Bacteria</taxon>
        <taxon>Pseudomonadati</taxon>
        <taxon>Pseudomonadota</taxon>
        <taxon>Betaproteobacteria</taxon>
        <taxon>Burkholderiales</taxon>
        <taxon>Burkholderiaceae</taxon>
        <taxon>Cupriavidus</taxon>
    </lineage>
</organism>
<accession>Q0K784</accession>
<proteinExistence type="inferred from homology"/>
<keyword id="KW-0328">Glycosyltransferase</keyword>
<keyword id="KW-1185">Reference proteome</keyword>
<keyword id="KW-0808">Transferase</keyword>
<reference key="1">
    <citation type="journal article" date="2006" name="Nat. Biotechnol.">
        <title>Genome sequence of the bioplastic-producing 'Knallgas' bacterium Ralstonia eutropha H16.</title>
        <authorList>
            <person name="Pohlmann A."/>
            <person name="Fricke W.F."/>
            <person name="Reinecke F."/>
            <person name="Kusian B."/>
            <person name="Liesegang H."/>
            <person name="Cramm R."/>
            <person name="Eitinger T."/>
            <person name="Ewering C."/>
            <person name="Poetter M."/>
            <person name="Schwartz E."/>
            <person name="Strittmatter A."/>
            <person name="Voss I."/>
            <person name="Gottschalk G."/>
            <person name="Steinbuechel A."/>
            <person name="Friedrich B."/>
            <person name="Bowien B."/>
        </authorList>
    </citation>
    <scope>NUCLEOTIDE SEQUENCE [LARGE SCALE GENOMIC DNA]</scope>
    <source>
        <strain>ATCC 17699 / DSM 428 / KCTC 22496 / NCIMB 10442 / H16 / Stanier 337</strain>
    </source>
</reference>
<name>PPNP_CUPNH</name>